<proteinExistence type="inferred from homology"/>
<evidence type="ECO:0000255" key="1">
    <source>
        <dbReference type="HAMAP-Rule" id="MF_00038"/>
    </source>
</evidence>
<name>MRAY_PROM9</name>
<feature type="chain" id="PRO_0000235466" description="Phospho-N-acetylmuramoyl-pentapeptide-transferase">
    <location>
        <begin position="1"/>
        <end position="358"/>
    </location>
</feature>
<feature type="transmembrane region" description="Helical" evidence="1">
    <location>
        <begin position="13"/>
        <end position="35"/>
    </location>
</feature>
<feature type="transmembrane region" description="Helical" evidence="1">
    <location>
        <begin position="81"/>
        <end position="101"/>
    </location>
</feature>
<feature type="transmembrane region" description="Helical" evidence="1">
    <location>
        <begin position="106"/>
        <end position="126"/>
    </location>
</feature>
<feature type="transmembrane region" description="Helical" evidence="1">
    <location>
        <begin position="142"/>
        <end position="162"/>
    </location>
</feature>
<feature type="transmembrane region" description="Helical" evidence="1">
    <location>
        <begin position="171"/>
        <end position="191"/>
    </location>
</feature>
<feature type="transmembrane region" description="Helical" evidence="1">
    <location>
        <begin position="201"/>
        <end position="221"/>
    </location>
</feature>
<feature type="transmembrane region" description="Helical" evidence="1">
    <location>
        <begin position="228"/>
        <end position="248"/>
    </location>
</feature>
<feature type="transmembrane region" description="Helical" evidence="1">
    <location>
        <begin position="268"/>
        <end position="290"/>
    </location>
</feature>
<feature type="transmembrane region" description="Helical" evidence="1">
    <location>
        <begin position="336"/>
        <end position="356"/>
    </location>
</feature>
<keyword id="KW-0131">Cell cycle</keyword>
<keyword id="KW-0132">Cell division</keyword>
<keyword id="KW-0997">Cell inner membrane</keyword>
<keyword id="KW-1003">Cell membrane</keyword>
<keyword id="KW-0133">Cell shape</keyword>
<keyword id="KW-0961">Cell wall biogenesis/degradation</keyword>
<keyword id="KW-0460">Magnesium</keyword>
<keyword id="KW-0472">Membrane</keyword>
<keyword id="KW-0479">Metal-binding</keyword>
<keyword id="KW-0573">Peptidoglycan synthesis</keyword>
<keyword id="KW-0808">Transferase</keyword>
<keyword id="KW-0812">Transmembrane</keyword>
<keyword id="KW-1133">Transmembrane helix</keyword>
<comment type="function">
    <text evidence="1">Catalyzes the initial step of the lipid cycle reactions in the biosynthesis of the cell wall peptidoglycan: transfers peptidoglycan precursor phospho-MurNAc-pentapeptide from UDP-MurNAc-pentapeptide onto the lipid carrier undecaprenyl phosphate, yielding undecaprenyl-pyrophosphoryl-MurNAc-pentapeptide, known as lipid I.</text>
</comment>
<comment type="catalytic activity">
    <reaction evidence="1">
        <text>UDP-N-acetyl-alpha-D-muramoyl-L-alanyl-gamma-D-glutamyl-meso-2,6-diaminopimeloyl-D-alanyl-D-alanine + di-trans,octa-cis-undecaprenyl phosphate = di-trans,octa-cis-undecaprenyl diphospho-N-acetyl-alpha-D-muramoyl-L-alanyl-D-glutamyl-meso-2,6-diaminopimeloyl-D-alanyl-D-alanine + UMP</text>
        <dbReference type="Rhea" id="RHEA:28386"/>
        <dbReference type="ChEBI" id="CHEBI:57865"/>
        <dbReference type="ChEBI" id="CHEBI:60392"/>
        <dbReference type="ChEBI" id="CHEBI:61386"/>
        <dbReference type="ChEBI" id="CHEBI:61387"/>
        <dbReference type="EC" id="2.7.8.13"/>
    </reaction>
</comment>
<comment type="cofactor">
    <cofactor evidence="1">
        <name>Mg(2+)</name>
        <dbReference type="ChEBI" id="CHEBI:18420"/>
    </cofactor>
</comment>
<comment type="pathway">
    <text evidence="1">Cell wall biogenesis; peptidoglycan biosynthesis.</text>
</comment>
<comment type="subcellular location">
    <subcellularLocation>
        <location evidence="1">Cell inner membrane</location>
        <topology evidence="1">Multi-pass membrane protein</topology>
    </subcellularLocation>
</comment>
<comment type="similarity">
    <text evidence="1">Belongs to the glycosyltransferase 4 family. MraY subfamily.</text>
</comment>
<sequence>MIGKIKKFNFKSLLILNTFALIATSYLFNNFIFIGVYTLFFFISLFTTKNGIKIIKKLNLLQNIRTEGPANHLKKSDTPTMGGVFMVIPFLIFLLIININLGSLKLFLLLLTIFGFFITGFVDDFLSIKKEQNTGLKTKEKFFLQSIIAIIFIFLAYEKDLINPLITVSDSWQINMNIFTLPISFLVLVGISNSVNLTDGLDGLAAGCSGIVFYGLGTEILMKEQQELIIFSILCYSMSGICLGFLKYNSYPAKIFMGDTGSLSIGAILGSIALLTNSVFTLSIFSGIFIIESLSVMIQVGVFKITKKLFHNGKRIFLMAPLHHHFELKGVKEQKIVENFWKINILLVILGIVLKINL</sequence>
<gene>
    <name evidence="1" type="primary">mraY</name>
    <name type="ordered locus">PMT9312_1802</name>
</gene>
<accession>Q317T2</accession>
<dbReference type="EC" id="2.7.8.13" evidence="1"/>
<dbReference type="EMBL" id="CP000111">
    <property type="protein sequence ID" value="ABB50863.1"/>
    <property type="molecule type" value="Genomic_DNA"/>
</dbReference>
<dbReference type="RefSeq" id="WP_011377344.1">
    <property type="nucleotide sequence ID" value="NC_007577.1"/>
</dbReference>
<dbReference type="SMR" id="Q317T2"/>
<dbReference type="STRING" id="74546.PMT9312_1802"/>
<dbReference type="KEGG" id="pmi:PMT9312_1802"/>
<dbReference type="eggNOG" id="COG0472">
    <property type="taxonomic scope" value="Bacteria"/>
</dbReference>
<dbReference type="HOGENOM" id="CLU_023982_0_2_3"/>
<dbReference type="OrthoDB" id="9805475at2"/>
<dbReference type="UniPathway" id="UPA00219"/>
<dbReference type="Proteomes" id="UP000002715">
    <property type="component" value="Chromosome"/>
</dbReference>
<dbReference type="GO" id="GO:0005886">
    <property type="term" value="C:plasma membrane"/>
    <property type="evidence" value="ECO:0007669"/>
    <property type="project" value="UniProtKB-SubCell"/>
</dbReference>
<dbReference type="GO" id="GO:0046872">
    <property type="term" value="F:metal ion binding"/>
    <property type="evidence" value="ECO:0007669"/>
    <property type="project" value="UniProtKB-KW"/>
</dbReference>
<dbReference type="GO" id="GO:0008963">
    <property type="term" value="F:phospho-N-acetylmuramoyl-pentapeptide-transferase activity"/>
    <property type="evidence" value="ECO:0007669"/>
    <property type="project" value="UniProtKB-UniRule"/>
</dbReference>
<dbReference type="GO" id="GO:0051992">
    <property type="term" value="F:UDP-N-acetylmuramoyl-L-alanyl-D-glutamyl-meso-2,6-diaminopimelyl-D-alanyl-D-alanine:undecaprenyl-phosphate transferase activity"/>
    <property type="evidence" value="ECO:0007669"/>
    <property type="project" value="RHEA"/>
</dbReference>
<dbReference type="GO" id="GO:0051301">
    <property type="term" value="P:cell division"/>
    <property type="evidence" value="ECO:0007669"/>
    <property type="project" value="UniProtKB-KW"/>
</dbReference>
<dbReference type="GO" id="GO:0071555">
    <property type="term" value="P:cell wall organization"/>
    <property type="evidence" value="ECO:0007669"/>
    <property type="project" value="UniProtKB-KW"/>
</dbReference>
<dbReference type="GO" id="GO:0009252">
    <property type="term" value="P:peptidoglycan biosynthetic process"/>
    <property type="evidence" value="ECO:0007669"/>
    <property type="project" value="UniProtKB-UniRule"/>
</dbReference>
<dbReference type="GO" id="GO:0008360">
    <property type="term" value="P:regulation of cell shape"/>
    <property type="evidence" value="ECO:0007669"/>
    <property type="project" value="UniProtKB-KW"/>
</dbReference>
<dbReference type="CDD" id="cd06852">
    <property type="entry name" value="GT_MraY"/>
    <property type="match status" value="1"/>
</dbReference>
<dbReference type="HAMAP" id="MF_00038">
    <property type="entry name" value="MraY"/>
    <property type="match status" value="1"/>
</dbReference>
<dbReference type="InterPro" id="IPR000715">
    <property type="entry name" value="Glycosyl_transferase_4"/>
</dbReference>
<dbReference type="InterPro" id="IPR003524">
    <property type="entry name" value="PNAcMuramoyl-5peptid_Trfase"/>
</dbReference>
<dbReference type="InterPro" id="IPR018480">
    <property type="entry name" value="PNAcMuramoyl-5peptid_Trfase_CS"/>
</dbReference>
<dbReference type="NCBIfam" id="TIGR00445">
    <property type="entry name" value="mraY"/>
    <property type="match status" value="1"/>
</dbReference>
<dbReference type="PANTHER" id="PTHR22926">
    <property type="entry name" value="PHOSPHO-N-ACETYLMURAMOYL-PENTAPEPTIDE-TRANSFERASE"/>
    <property type="match status" value="1"/>
</dbReference>
<dbReference type="PANTHER" id="PTHR22926:SF5">
    <property type="entry name" value="PHOSPHO-N-ACETYLMURAMOYL-PENTAPEPTIDE-TRANSFERASE HOMOLOG"/>
    <property type="match status" value="1"/>
</dbReference>
<dbReference type="Pfam" id="PF00953">
    <property type="entry name" value="Glycos_transf_4"/>
    <property type="match status" value="1"/>
</dbReference>
<dbReference type="Pfam" id="PF10555">
    <property type="entry name" value="MraY_sig1"/>
    <property type="match status" value="1"/>
</dbReference>
<dbReference type="PROSITE" id="PS01347">
    <property type="entry name" value="MRAY_1"/>
    <property type="match status" value="1"/>
</dbReference>
<dbReference type="PROSITE" id="PS01348">
    <property type="entry name" value="MRAY_2"/>
    <property type="match status" value="1"/>
</dbReference>
<protein>
    <recommendedName>
        <fullName evidence="1">Phospho-N-acetylmuramoyl-pentapeptide-transferase</fullName>
        <ecNumber evidence="1">2.7.8.13</ecNumber>
    </recommendedName>
    <alternativeName>
        <fullName evidence="1">UDP-MurNAc-pentapeptide phosphotransferase</fullName>
    </alternativeName>
</protein>
<reference key="1">
    <citation type="journal article" date="2006" name="Science">
        <title>Genomic islands and the ecology and evolution of Prochlorococcus.</title>
        <authorList>
            <person name="Coleman M.L."/>
            <person name="Sullivan M.B."/>
            <person name="Martiny A.C."/>
            <person name="Steglich C."/>
            <person name="Barry K."/>
            <person name="Delong E.F."/>
            <person name="Chisholm S.W."/>
        </authorList>
    </citation>
    <scope>NUCLEOTIDE SEQUENCE [LARGE SCALE GENOMIC DNA]</scope>
    <source>
        <strain>MIT 9312</strain>
    </source>
</reference>
<organism>
    <name type="scientific">Prochlorococcus marinus (strain MIT 9312)</name>
    <dbReference type="NCBI Taxonomy" id="74546"/>
    <lineage>
        <taxon>Bacteria</taxon>
        <taxon>Bacillati</taxon>
        <taxon>Cyanobacteriota</taxon>
        <taxon>Cyanophyceae</taxon>
        <taxon>Synechococcales</taxon>
        <taxon>Prochlorococcaceae</taxon>
        <taxon>Prochlorococcus</taxon>
    </lineage>
</organism>